<dbReference type="EMBL" id="AE008922">
    <property type="protein sequence ID" value="AAM40498.1"/>
    <property type="molecule type" value="Genomic_DNA"/>
</dbReference>
<dbReference type="RefSeq" id="NP_636574.1">
    <property type="nucleotide sequence ID" value="NC_003902.1"/>
</dbReference>
<dbReference type="RefSeq" id="WP_011036397.1">
    <property type="nucleotide sequence ID" value="NC_003902.1"/>
</dbReference>
<dbReference type="SMR" id="Q8PBC2"/>
<dbReference type="STRING" id="190485.XCC1200"/>
<dbReference type="DNASU" id="1001622"/>
<dbReference type="EnsemblBacteria" id="AAM40498">
    <property type="protein sequence ID" value="AAM40498"/>
    <property type="gene ID" value="XCC1200"/>
</dbReference>
<dbReference type="KEGG" id="xcc:XCC1200"/>
<dbReference type="PATRIC" id="fig|190485.4.peg.1289"/>
<dbReference type="eggNOG" id="COG0806">
    <property type="taxonomic scope" value="Bacteria"/>
</dbReference>
<dbReference type="HOGENOM" id="CLU_077636_1_0_6"/>
<dbReference type="OrthoDB" id="9783509at2"/>
<dbReference type="Proteomes" id="UP000001010">
    <property type="component" value="Chromosome"/>
</dbReference>
<dbReference type="GO" id="GO:0005829">
    <property type="term" value="C:cytosol"/>
    <property type="evidence" value="ECO:0000318"/>
    <property type="project" value="GO_Central"/>
</dbReference>
<dbReference type="GO" id="GO:0005840">
    <property type="term" value="C:ribosome"/>
    <property type="evidence" value="ECO:0007669"/>
    <property type="project" value="InterPro"/>
</dbReference>
<dbReference type="GO" id="GO:0043022">
    <property type="term" value="F:ribosome binding"/>
    <property type="evidence" value="ECO:0007669"/>
    <property type="project" value="InterPro"/>
</dbReference>
<dbReference type="GO" id="GO:0030490">
    <property type="term" value="P:maturation of SSU-rRNA"/>
    <property type="evidence" value="ECO:0000318"/>
    <property type="project" value="GO_Central"/>
</dbReference>
<dbReference type="Gene3D" id="2.30.30.240">
    <property type="entry name" value="PRC-barrel domain"/>
    <property type="match status" value="1"/>
</dbReference>
<dbReference type="Gene3D" id="2.40.30.60">
    <property type="entry name" value="RimM"/>
    <property type="match status" value="1"/>
</dbReference>
<dbReference type="HAMAP" id="MF_00014">
    <property type="entry name" value="Ribosome_mat_RimM"/>
    <property type="match status" value="1"/>
</dbReference>
<dbReference type="InterPro" id="IPR011033">
    <property type="entry name" value="PRC_barrel-like_sf"/>
</dbReference>
<dbReference type="InterPro" id="IPR056792">
    <property type="entry name" value="PRC_RimM"/>
</dbReference>
<dbReference type="InterPro" id="IPR011961">
    <property type="entry name" value="RimM"/>
</dbReference>
<dbReference type="InterPro" id="IPR002676">
    <property type="entry name" value="RimM_N"/>
</dbReference>
<dbReference type="InterPro" id="IPR036976">
    <property type="entry name" value="RimM_N_sf"/>
</dbReference>
<dbReference type="InterPro" id="IPR009000">
    <property type="entry name" value="Transl_B-barrel_sf"/>
</dbReference>
<dbReference type="NCBIfam" id="TIGR02273">
    <property type="entry name" value="16S_RimM"/>
    <property type="match status" value="1"/>
</dbReference>
<dbReference type="PANTHER" id="PTHR33692">
    <property type="entry name" value="RIBOSOME MATURATION FACTOR RIMM"/>
    <property type="match status" value="1"/>
</dbReference>
<dbReference type="PANTHER" id="PTHR33692:SF1">
    <property type="entry name" value="RIBOSOME MATURATION FACTOR RIMM"/>
    <property type="match status" value="1"/>
</dbReference>
<dbReference type="Pfam" id="PF24986">
    <property type="entry name" value="PRC_RimM"/>
    <property type="match status" value="1"/>
</dbReference>
<dbReference type="Pfam" id="PF01782">
    <property type="entry name" value="RimM"/>
    <property type="match status" value="1"/>
</dbReference>
<dbReference type="SUPFAM" id="SSF50346">
    <property type="entry name" value="PRC-barrel domain"/>
    <property type="match status" value="1"/>
</dbReference>
<dbReference type="SUPFAM" id="SSF50447">
    <property type="entry name" value="Translation proteins"/>
    <property type="match status" value="1"/>
</dbReference>
<organism>
    <name type="scientific">Xanthomonas campestris pv. campestris (strain ATCC 33913 / DSM 3586 / NCPPB 528 / LMG 568 / P 25)</name>
    <dbReference type="NCBI Taxonomy" id="190485"/>
    <lineage>
        <taxon>Bacteria</taxon>
        <taxon>Pseudomonadati</taxon>
        <taxon>Pseudomonadota</taxon>
        <taxon>Gammaproteobacteria</taxon>
        <taxon>Lysobacterales</taxon>
        <taxon>Lysobacteraceae</taxon>
        <taxon>Xanthomonas</taxon>
    </lineage>
</organism>
<protein>
    <recommendedName>
        <fullName evidence="1">Ribosome maturation factor RimM</fullName>
    </recommendedName>
</protein>
<proteinExistence type="inferred from homology"/>
<keyword id="KW-0143">Chaperone</keyword>
<keyword id="KW-0963">Cytoplasm</keyword>
<keyword id="KW-1185">Reference proteome</keyword>
<keyword id="KW-0690">Ribosome biogenesis</keyword>
<keyword id="KW-0698">rRNA processing</keyword>
<sequence>MKPTERRILLGRIVGAFGVKGELKLESWTEPRSAIFRYQPWIVRTPSGQESVLSGVRGRDQGKNLIAVFPDITDRDTVEAMHGTEIYVARSALPPPKPDEYYWVDLEGLQVETVEGVKLGTVSHLFSTGSNDVVVVRGDRERMIPFVLPEYVKSVDFEANLIVVDWDPDF</sequence>
<comment type="function">
    <text evidence="1">An accessory protein needed during the final step in the assembly of 30S ribosomal subunit, possibly for assembly of the head region. Essential for efficient processing of 16S rRNA. May be needed both before and after RbfA during the maturation of 16S rRNA. It has affinity for free ribosomal 30S subunits but not for 70S ribosomes.</text>
</comment>
<comment type="subunit">
    <text evidence="1">Binds ribosomal protein uS19.</text>
</comment>
<comment type="subcellular location">
    <subcellularLocation>
        <location evidence="1">Cytoplasm</location>
    </subcellularLocation>
</comment>
<comment type="domain">
    <text evidence="1">The PRC barrel domain binds ribosomal protein uS19.</text>
</comment>
<comment type="similarity">
    <text evidence="1">Belongs to the RimM family.</text>
</comment>
<accession>Q8PBC2</accession>
<gene>
    <name evidence="1" type="primary">rimM</name>
    <name type="ordered locus">XCC1200</name>
</gene>
<reference key="1">
    <citation type="journal article" date="2002" name="Nature">
        <title>Comparison of the genomes of two Xanthomonas pathogens with differing host specificities.</title>
        <authorList>
            <person name="da Silva A.C.R."/>
            <person name="Ferro J.A."/>
            <person name="Reinach F.C."/>
            <person name="Farah C.S."/>
            <person name="Furlan L.R."/>
            <person name="Quaggio R.B."/>
            <person name="Monteiro-Vitorello C.B."/>
            <person name="Van Sluys M.A."/>
            <person name="Almeida N.F. Jr."/>
            <person name="Alves L.M.C."/>
            <person name="do Amaral A.M."/>
            <person name="Bertolini M.C."/>
            <person name="Camargo L.E.A."/>
            <person name="Camarotte G."/>
            <person name="Cannavan F."/>
            <person name="Cardozo J."/>
            <person name="Chambergo F."/>
            <person name="Ciapina L.P."/>
            <person name="Cicarelli R.M.B."/>
            <person name="Coutinho L.L."/>
            <person name="Cursino-Santos J.R."/>
            <person name="El-Dorry H."/>
            <person name="Faria J.B."/>
            <person name="Ferreira A.J.S."/>
            <person name="Ferreira R.C.C."/>
            <person name="Ferro M.I.T."/>
            <person name="Formighieri E.F."/>
            <person name="Franco M.C."/>
            <person name="Greggio C.C."/>
            <person name="Gruber A."/>
            <person name="Katsuyama A.M."/>
            <person name="Kishi L.T."/>
            <person name="Leite R.P."/>
            <person name="Lemos E.G.M."/>
            <person name="Lemos M.V.F."/>
            <person name="Locali E.C."/>
            <person name="Machado M.A."/>
            <person name="Madeira A.M.B.N."/>
            <person name="Martinez-Rossi N.M."/>
            <person name="Martins E.C."/>
            <person name="Meidanis J."/>
            <person name="Menck C.F.M."/>
            <person name="Miyaki C.Y."/>
            <person name="Moon D.H."/>
            <person name="Moreira L.M."/>
            <person name="Novo M.T.M."/>
            <person name="Okura V.K."/>
            <person name="Oliveira M.C."/>
            <person name="Oliveira V.R."/>
            <person name="Pereira H.A."/>
            <person name="Rossi A."/>
            <person name="Sena J.A.D."/>
            <person name="Silva C."/>
            <person name="de Souza R.F."/>
            <person name="Spinola L.A.F."/>
            <person name="Takita M.A."/>
            <person name="Tamura R.E."/>
            <person name="Teixeira E.C."/>
            <person name="Tezza R.I.D."/>
            <person name="Trindade dos Santos M."/>
            <person name="Truffi D."/>
            <person name="Tsai S.M."/>
            <person name="White F.F."/>
            <person name="Setubal J.C."/>
            <person name="Kitajima J.P."/>
        </authorList>
    </citation>
    <scope>NUCLEOTIDE SEQUENCE [LARGE SCALE GENOMIC DNA]</scope>
    <source>
        <strain>ATCC 33913 / DSM 3586 / NCPPB 528 / LMG 568 / P 25</strain>
    </source>
</reference>
<evidence type="ECO:0000255" key="1">
    <source>
        <dbReference type="HAMAP-Rule" id="MF_00014"/>
    </source>
</evidence>
<feature type="chain" id="PRO_0000163391" description="Ribosome maturation factor RimM">
    <location>
        <begin position="1"/>
        <end position="170"/>
    </location>
</feature>
<feature type="domain" description="PRC barrel" evidence="1">
    <location>
        <begin position="98"/>
        <end position="170"/>
    </location>
</feature>
<name>RIMM_XANCP</name>